<reference key="1">
    <citation type="journal article" date="2002" name="Mol. Biol. Evol.">
        <title>The plastid chromosome of Atropa belladonna and its comparison with that of Nicotiana tabacum: the role of RNA editing in generating divergence in the process of plant speciation.</title>
        <authorList>
            <person name="Schmitz-Linneweber C."/>
            <person name="Regel R."/>
            <person name="Du T.G."/>
            <person name="Hupfer H."/>
            <person name="Herrmann R.G."/>
            <person name="Maier R.M."/>
        </authorList>
    </citation>
    <scope>NUCLEOTIDE SEQUENCE [LARGE SCALE GENOMIC DNA]</scope>
    <source>
        <strain>cv. Ab5p(kan)</strain>
    </source>
</reference>
<organism>
    <name type="scientific">Atropa belladonna</name>
    <name type="common">Belladonna</name>
    <name type="synonym">Deadly nightshade</name>
    <dbReference type="NCBI Taxonomy" id="33113"/>
    <lineage>
        <taxon>Eukaryota</taxon>
        <taxon>Viridiplantae</taxon>
        <taxon>Streptophyta</taxon>
        <taxon>Embryophyta</taxon>
        <taxon>Tracheophyta</taxon>
        <taxon>Spermatophyta</taxon>
        <taxon>Magnoliopsida</taxon>
        <taxon>eudicotyledons</taxon>
        <taxon>Gunneridae</taxon>
        <taxon>Pentapetalae</taxon>
        <taxon>asterids</taxon>
        <taxon>lamiids</taxon>
        <taxon>Solanales</taxon>
        <taxon>Solanaceae</taxon>
        <taxon>Solanoideae</taxon>
        <taxon>Hyoscyameae</taxon>
        <taxon>Atropa</taxon>
    </lineage>
</organism>
<sequence>MGLPWYRVHTVVLNDPGRLLSVHIMHTALVAGWAGSMALYELAVFDPSDPVLDPMWRQGMFVIPFMTRLGITNSWGGWSITGGTVTNPGIWSYEGVAGAHIVFSGLCFLAAIWHWVYWDLEIFCDERTGKPSLDLPKIFGIHLFLSGVACFGFGAFHVTGLYGPGIWVSDPYGLTGKVQPVNPAWGVEGFDPFVPGGIASHHIAAGTLGILAGLFHLSVRPPQRLYKGLRMGNIETVLSSSIAAVFFAAFVVAGTMWYGSATTPIELFGPTRYQWDQGYFQQEIYRRVSAGLAENQSLSEAWSKIPEKLAFYDYIGNNPAKGGLFRAGSMDNGDGIAVGWLGHPIFRDKEGRELFVRRMPTFFETFPVVLVDGDGIVRADVPFRRAESKYSVEQVGVTVEFYGGELNGVSYSDPATVKKYARRAQLGEIFELDRATLKSDGVFRSSPRGWFTFGHASFALLFFFGHIWHGARTLFRDVFAGIDPDLDAQVEFGAFQKLGDPTTKRQAA</sequence>
<name>PSBB_ATRBE</name>
<keyword id="KW-0148">Chlorophyll</keyword>
<keyword id="KW-0150">Chloroplast</keyword>
<keyword id="KW-0157">Chromophore</keyword>
<keyword id="KW-0472">Membrane</keyword>
<keyword id="KW-0602">Photosynthesis</keyword>
<keyword id="KW-0604">Photosystem II</keyword>
<keyword id="KW-0934">Plastid</keyword>
<keyword id="KW-0793">Thylakoid</keyword>
<keyword id="KW-0812">Transmembrane</keyword>
<keyword id="KW-1133">Transmembrane helix</keyword>
<gene>
    <name evidence="1" type="primary">psbB</name>
</gene>
<comment type="function">
    <text evidence="1">One of the components of the core complex of photosystem II (PSII). It binds chlorophyll and helps catalyze the primary light-induced photochemical processes of PSII. PSII is a light-driven water:plastoquinone oxidoreductase, using light energy to abstract electrons from H(2)O, generating O(2) and a proton gradient subsequently used for ATP formation.</text>
</comment>
<comment type="cofactor">
    <text evidence="1">Binds multiple chlorophylls. PSII binds additional chlorophylls, carotenoids and specific lipids.</text>
</comment>
<comment type="subunit">
    <text evidence="1">PSII is composed of 1 copy each of membrane proteins PsbA, PsbB, PsbC, PsbD, PsbE, PsbF, PsbH, PsbI, PsbJ, PsbK, PsbL, PsbM, PsbT, PsbX, PsbY, PsbZ, Psb30/Ycf12, at least 3 peripheral proteins of the oxygen-evolving complex and a large number of cofactors. It forms dimeric complexes.</text>
</comment>
<comment type="subcellular location">
    <subcellularLocation>
        <location evidence="1">Plastid</location>
        <location evidence="1">Chloroplast thylakoid membrane</location>
        <topology evidence="1">Multi-pass membrane protein</topology>
    </subcellularLocation>
</comment>
<comment type="similarity">
    <text evidence="1">Belongs to the PsbB/PsbC family. PsbB subfamily.</text>
</comment>
<accession>Q7FNS4</accession>
<proteinExistence type="inferred from homology"/>
<geneLocation type="chloroplast"/>
<feature type="chain" id="PRO_0000359797" description="Photosystem II CP47 reaction center protein">
    <location>
        <begin position="1"/>
        <end position="508"/>
    </location>
</feature>
<feature type="transmembrane region" description="Helical" evidence="1">
    <location>
        <begin position="21"/>
        <end position="36"/>
    </location>
</feature>
<feature type="transmembrane region" description="Helical" evidence="1">
    <location>
        <begin position="101"/>
        <end position="115"/>
    </location>
</feature>
<feature type="transmembrane region" description="Helical" evidence="1">
    <location>
        <begin position="140"/>
        <end position="156"/>
    </location>
</feature>
<feature type="transmembrane region" description="Helical" evidence="1">
    <location>
        <begin position="203"/>
        <end position="218"/>
    </location>
</feature>
<feature type="transmembrane region" description="Helical" evidence="1">
    <location>
        <begin position="237"/>
        <end position="252"/>
    </location>
</feature>
<feature type="transmembrane region" description="Helical" evidence="1">
    <location>
        <begin position="457"/>
        <end position="472"/>
    </location>
</feature>
<protein>
    <recommendedName>
        <fullName evidence="1">Photosystem II CP47 reaction center protein</fullName>
    </recommendedName>
    <alternativeName>
        <fullName evidence="1">PSII 47 kDa protein</fullName>
    </alternativeName>
    <alternativeName>
        <fullName evidence="1">Protein CP-47</fullName>
    </alternativeName>
</protein>
<dbReference type="EMBL" id="AJ316582">
    <property type="protein sequence ID" value="CAC88070.1"/>
    <property type="molecule type" value="Genomic_DNA"/>
</dbReference>
<dbReference type="RefSeq" id="NP_783257.1">
    <property type="nucleotide sequence ID" value="NC_004561.1"/>
</dbReference>
<dbReference type="SMR" id="Q7FNS4"/>
<dbReference type="GeneID" id="806531"/>
<dbReference type="GO" id="GO:0009535">
    <property type="term" value="C:chloroplast thylakoid membrane"/>
    <property type="evidence" value="ECO:0007669"/>
    <property type="project" value="UniProtKB-SubCell"/>
</dbReference>
<dbReference type="GO" id="GO:0009523">
    <property type="term" value="C:photosystem II"/>
    <property type="evidence" value="ECO:0007669"/>
    <property type="project" value="UniProtKB-KW"/>
</dbReference>
<dbReference type="GO" id="GO:0016168">
    <property type="term" value="F:chlorophyll binding"/>
    <property type="evidence" value="ECO:0007669"/>
    <property type="project" value="UniProtKB-UniRule"/>
</dbReference>
<dbReference type="GO" id="GO:0045156">
    <property type="term" value="F:electron transporter, transferring electrons within the cyclic electron transport pathway of photosynthesis activity"/>
    <property type="evidence" value="ECO:0007669"/>
    <property type="project" value="InterPro"/>
</dbReference>
<dbReference type="GO" id="GO:0009772">
    <property type="term" value="P:photosynthetic electron transport in photosystem II"/>
    <property type="evidence" value="ECO:0007669"/>
    <property type="project" value="InterPro"/>
</dbReference>
<dbReference type="FunFam" id="3.10.680.10:FF:000001">
    <property type="entry name" value="Photosystem II CP47 reaction center protein"/>
    <property type="match status" value="1"/>
</dbReference>
<dbReference type="Gene3D" id="3.10.680.10">
    <property type="entry name" value="Photosystem II CP47 reaction center protein"/>
    <property type="match status" value="1"/>
</dbReference>
<dbReference type="HAMAP" id="MF_01495">
    <property type="entry name" value="PSII_PsbB_CP47"/>
    <property type="match status" value="1"/>
</dbReference>
<dbReference type="InterPro" id="IPR000932">
    <property type="entry name" value="PS_antenna-like"/>
</dbReference>
<dbReference type="InterPro" id="IPR036001">
    <property type="entry name" value="PS_II_antenna-like_sf"/>
</dbReference>
<dbReference type="InterPro" id="IPR017486">
    <property type="entry name" value="PSII_PsbB"/>
</dbReference>
<dbReference type="NCBIfam" id="TIGR03039">
    <property type="entry name" value="PS_II_CP47"/>
    <property type="match status" value="1"/>
</dbReference>
<dbReference type="PANTHER" id="PTHR33180">
    <property type="entry name" value="PHOTOSYSTEM II CP43 REACTION CENTER PROTEIN"/>
    <property type="match status" value="1"/>
</dbReference>
<dbReference type="PANTHER" id="PTHR33180:SF35">
    <property type="entry name" value="PHOTOSYSTEM II CP47 REACTION CENTER PROTEIN"/>
    <property type="match status" value="1"/>
</dbReference>
<dbReference type="Pfam" id="PF00421">
    <property type="entry name" value="PSII"/>
    <property type="match status" value="1"/>
</dbReference>
<dbReference type="SUPFAM" id="SSF161077">
    <property type="entry name" value="Photosystem II antenna protein-like"/>
    <property type="match status" value="1"/>
</dbReference>
<evidence type="ECO:0000255" key="1">
    <source>
        <dbReference type="HAMAP-Rule" id="MF_01495"/>
    </source>
</evidence>